<reference key="1">
    <citation type="submission" date="2007-10" db="EMBL/GenBank/DDBJ databases">
        <title>Complete sequence of Desulfococcus oleovorans Hxd3.</title>
        <authorList>
            <consortium name="US DOE Joint Genome Institute"/>
            <person name="Copeland A."/>
            <person name="Lucas S."/>
            <person name="Lapidus A."/>
            <person name="Barry K."/>
            <person name="Glavina del Rio T."/>
            <person name="Dalin E."/>
            <person name="Tice H."/>
            <person name="Pitluck S."/>
            <person name="Kiss H."/>
            <person name="Brettin T."/>
            <person name="Bruce D."/>
            <person name="Detter J.C."/>
            <person name="Han C."/>
            <person name="Schmutz J."/>
            <person name="Larimer F."/>
            <person name="Land M."/>
            <person name="Hauser L."/>
            <person name="Kyrpides N."/>
            <person name="Kim E."/>
            <person name="Wawrik B."/>
            <person name="Richardson P."/>
        </authorList>
    </citation>
    <scope>NUCLEOTIDE SEQUENCE [LARGE SCALE GENOMIC DNA]</scope>
    <source>
        <strain>DSM 6200 / JCM 39069 / Hxd3</strain>
    </source>
</reference>
<protein>
    <recommendedName>
        <fullName evidence="1">Probable GTP-binding protein EngB</fullName>
    </recommendedName>
</protein>
<feature type="chain" id="PRO_1000115969" description="Probable GTP-binding protein EngB">
    <location>
        <begin position="1"/>
        <end position="197"/>
    </location>
</feature>
<feature type="domain" description="EngB-type G" evidence="1">
    <location>
        <begin position="22"/>
        <end position="194"/>
    </location>
</feature>
<feature type="binding site" evidence="1">
    <location>
        <begin position="30"/>
        <end position="37"/>
    </location>
    <ligand>
        <name>GTP</name>
        <dbReference type="ChEBI" id="CHEBI:37565"/>
    </ligand>
</feature>
<feature type="binding site" evidence="1">
    <location>
        <position position="37"/>
    </location>
    <ligand>
        <name>Mg(2+)</name>
        <dbReference type="ChEBI" id="CHEBI:18420"/>
    </ligand>
</feature>
<feature type="binding site" evidence="1">
    <location>
        <begin position="57"/>
        <end position="61"/>
    </location>
    <ligand>
        <name>GTP</name>
        <dbReference type="ChEBI" id="CHEBI:37565"/>
    </ligand>
</feature>
<feature type="binding site" evidence="1">
    <location>
        <position position="59"/>
    </location>
    <ligand>
        <name>Mg(2+)</name>
        <dbReference type="ChEBI" id="CHEBI:18420"/>
    </ligand>
</feature>
<feature type="binding site" evidence="1">
    <location>
        <begin position="75"/>
        <end position="78"/>
    </location>
    <ligand>
        <name>GTP</name>
        <dbReference type="ChEBI" id="CHEBI:37565"/>
    </ligand>
</feature>
<feature type="binding site" evidence="1">
    <location>
        <begin position="142"/>
        <end position="145"/>
    </location>
    <ligand>
        <name>GTP</name>
        <dbReference type="ChEBI" id="CHEBI:37565"/>
    </ligand>
</feature>
<feature type="binding site" evidence="1">
    <location>
        <begin position="173"/>
        <end position="175"/>
    </location>
    <ligand>
        <name>GTP</name>
        <dbReference type="ChEBI" id="CHEBI:37565"/>
    </ligand>
</feature>
<organism>
    <name type="scientific">Desulfosudis oleivorans (strain DSM 6200 / JCM 39069 / Hxd3)</name>
    <name type="common">Desulfococcus oleovorans</name>
    <dbReference type="NCBI Taxonomy" id="96561"/>
    <lineage>
        <taxon>Bacteria</taxon>
        <taxon>Pseudomonadati</taxon>
        <taxon>Thermodesulfobacteriota</taxon>
        <taxon>Desulfobacteria</taxon>
        <taxon>Desulfobacterales</taxon>
        <taxon>Desulfosudaceae</taxon>
        <taxon>Desulfosudis</taxon>
    </lineage>
</organism>
<comment type="function">
    <text evidence="1">Necessary for normal cell division and for the maintenance of normal septation.</text>
</comment>
<comment type="cofactor">
    <cofactor evidence="1">
        <name>Mg(2+)</name>
        <dbReference type="ChEBI" id="CHEBI:18420"/>
    </cofactor>
</comment>
<comment type="similarity">
    <text evidence="1">Belongs to the TRAFAC class TrmE-Era-EngA-EngB-Septin-like GTPase superfamily. EngB GTPase family.</text>
</comment>
<proteinExistence type="inferred from homology"/>
<dbReference type="EMBL" id="CP000859">
    <property type="protein sequence ID" value="ABW66924.1"/>
    <property type="molecule type" value="Genomic_DNA"/>
</dbReference>
<dbReference type="RefSeq" id="WP_012174542.1">
    <property type="nucleotide sequence ID" value="NC_009943.1"/>
</dbReference>
<dbReference type="SMR" id="A8ZXG6"/>
<dbReference type="STRING" id="96561.Dole_1117"/>
<dbReference type="KEGG" id="dol:Dole_1117"/>
<dbReference type="eggNOG" id="COG0218">
    <property type="taxonomic scope" value="Bacteria"/>
</dbReference>
<dbReference type="HOGENOM" id="CLU_033732_3_0_7"/>
<dbReference type="OrthoDB" id="9804921at2"/>
<dbReference type="Proteomes" id="UP000008561">
    <property type="component" value="Chromosome"/>
</dbReference>
<dbReference type="GO" id="GO:0005829">
    <property type="term" value="C:cytosol"/>
    <property type="evidence" value="ECO:0007669"/>
    <property type="project" value="TreeGrafter"/>
</dbReference>
<dbReference type="GO" id="GO:0005525">
    <property type="term" value="F:GTP binding"/>
    <property type="evidence" value="ECO:0007669"/>
    <property type="project" value="UniProtKB-UniRule"/>
</dbReference>
<dbReference type="GO" id="GO:0046872">
    <property type="term" value="F:metal ion binding"/>
    <property type="evidence" value="ECO:0007669"/>
    <property type="project" value="UniProtKB-KW"/>
</dbReference>
<dbReference type="GO" id="GO:0000917">
    <property type="term" value="P:division septum assembly"/>
    <property type="evidence" value="ECO:0007669"/>
    <property type="project" value="UniProtKB-KW"/>
</dbReference>
<dbReference type="CDD" id="cd01876">
    <property type="entry name" value="YihA_EngB"/>
    <property type="match status" value="1"/>
</dbReference>
<dbReference type="FunFam" id="3.40.50.300:FF:000098">
    <property type="entry name" value="Probable GTP-binding protein EngB"/>
    <property type="match status" value="1"/>
</dbReference>
<dbReference type="Gene3D" id="3.40.50.300">
    <property type="entry name" value="P-loop containing nucleotide triphosphate hydrolases"/>
    <property type="match status" value="1"/>
</dbReference>
<dbReference type="HAMAP" id="MF_00321">
    <property type="entry name" value="GTPase_EngB"/>
    <property type="match status" value="1"/>
</dbReference>
<dbReference type="InterPro" id="IPR030393">
    <property type="entry name" value="G_ENGB_dom"/>
</dbReference>
<dbReference type="InterPro" id="IPR006073">
    <property type="entry name" value="GTP-bd"/>
</dbReference>
<dbReference type="InterPro" id="IPR019987">
    <property type="entry name" value="GTP-bd_ribosome_bio_YsxC"/>
</dbReference>
<dbReference type="InterPro" id="IPR027417">
    <property type="entry name" value="P-loop_NTPase"/>
</dbReference>
<dbReference type="NCBIfam" id="TIGR03598">
    <property type="entry name" value="GTPase_YsxC"/>
    <property type="match status" value="1"/>
</dbReference>
<dbReference type="PANTHER" id="PTHR11649:SF13">
    <property type="entry name" value="ENGB-TYPE G DOMAIN-CONTAINING PROTEIN"/>
    <property type="match status" value="1"/>
</dbReference>
<dbReference type="PANTHER" id="PTHR11649">
    <property type="entry name" value="MSS1/TRME-RELATED GTP-BINDING PROTEIN"/>
    <property type="match status" value="1"/>
</dbReference>
<dbReference type="Pfam" id="PF01926">
    <property type="entry name" value="MMR_HSR1"/>
    <property type="match status" value="1"/>
</dbReference>
<dbReference type="SUPFAM" id="SSF52540">
    <property type="entry name" value="P-loop containing nucleoside triphosphate hydrolases"/>
    <property type="match status" value="1"/>
</dbReference>
<dbReference type="PROSITE" id="PS51706">
    <property type="entry name" value="G_ENGB"/>
    <property type="match status" value="1"/>
</dbReference>
<sequence length="197" mass="22563">MIIRSAEFVISAVQPSQYPDTDLPEIAFAGRSNVGKSSMINLLVNRKNLVKTSSTPGKTRLINFFDINGQLMFVDLPGYGYAKVSRKEQKTWGPMVERYLSSRKTLRGLMLLMDLRREPREDEFLMMQWCAHYDIPWKMVLTKADKFKKTAADRRRHEIARAVGIGADEMILFSTLQKMGRDPALETIARMTGILEE</sequence>
<keyword id="KW-0131">Cell cycle</keyword>
<keyword id="KW-0132">Cell division</keyword>
<keyword id="KW-0342">GTP-binding</keyword>
<keyword id="KW-0460">Magnesium</keyword>
<keyword id="KW-0479">Metal-binding</keyword>
<keyword id="KW-0547">Nucleotide-binding</keyword>
<keyword id="KW-1185">Reference proteome</keyword>
<keyword id="KW-0717">Septation</keyword>
<accession>A8ZXG6</accession>
<name>ENGB_DESOH</name>
<evidence type="ECO:0000255" key="1">
    <source>
        <dbReference type="HAMAP-Rule" id="MF_00321"/>
    </source>
</evidence>
<gene>
    <name evidence="1" type="primary">engB</name>
    <name type="ordered locus">Dole_1117</name>
</gene>